<name>PSBM_ORYSI</name>
<accession>P0C412</accession>
<accession>P12169</accession>
<accession>P62110</accession>
<accession>Q6QXV8</accession>
<evidence type="ECO:0000255" key="1">
    <source>
        <dbReference type="HAMAP-Rule" id="MF_00438"/>
    </source>
</evidence>
<gene>
    <name evidence="1" type="primary">psbM</name>
</gene>
<comment type="function">
    <text evidence="1">One of the components of the core complex of photosystem II (PSII). PSII is a light-driven water:plastoquinone oxidoreductase that uses light energy to abstract electrons from H(2)O, generating O(2) and a proton gradient subsequently used for ATP formation. It consists of a core antenna complex that captures photons, and an electron transfer chain that converts photonic excitation into a charge separation. This subunit is found at the monomer-monomer interface.</text>
</comment>
<comment type="subunit">
    <text evidence="1">PSII is composed of 1 copy each of membrane proteins PsbA, PsbB, PsbC, PsbD, PsbE, PsbF, PsbH, PsbI, PsbJ, PsbK, PsbL, PsbM, PsbT, PsbX, PsbY, PsbZ, Psb30/Ycf12, at least 3 peripheral proteins of the oxygen-evolving complex and a large number of cofactors. It forms dimeric complexes.</text>
</comment>
<comment type="subcellular location">
    <subcellularLocation>
        <location evidence="1">Plastid</location>
        <location evidence="1">Chloroplast thylakoid membrane</location>
        <topology evidence="1">Single-pass membrane protein</topology>
    </subcellularLocation>
</comment>
<comment type="similarity">
    <text evidence="1">Belongs to the PsbM family.</text>
</comment>
<sequence>MEVNILAFIATALFILVPTAFLLIIYVKTVSQND</sequence>
<protein>
    <recommendedName>
        <fullName evidence="1">Photosystem II reaction center protein M</fullName>
        <shortName evidence="1">PSII-M</shortName>
    </recommendedName>
</protein>
<organism>
    <name type="scientific">Oryza sativa subsp. indica</name>
    <name type="common">Rice</name>
    <dbReference type="NCBI Taxonomy" id="39946"/>
    <lineage>
        <taxon>Eukaryota</taxon>
        <taxon>Viridiplantae</taxon>
        <taxon>Streptophyta</taxon>
        <taxon>Embryophyta</taxon>
        <taxon>Tracheophyta</taxon>
        <taxon>Spermatophyta</taxon>
        <taxon>Magnoliopsida</taxon>
        <taxon>Liliopsida</taxon>
        <taxon>Poales</taxon>
        <taxon>Poaceae</taxon>
        <taxon>BOP clade</taxon>
        <taxon>Oryzoideae</taxon>
        <taxon>Oryzeae</taxon>
        <taxon>Oryzinae</taxon>
        <taxon>Oryza</taxon>
        <taxon>Oryza sativa</taxon>
    </lineage>
</organism>
<keyword id="KW-0150">Chloroplast</keyword>
<keyword id="KW-0472">Membrane</keyword>
<keyword id="KW-0602">Photosynthesis</keyword>
<keyword id="KW-0604">Photosystem II</keyword>
<keyword id="KW-0934">Plastid</keyword>
<keyword id="KW-0674">Reaction center</keyword>
<keyword id="KW-1185">Reference proteome</keyword>
<keyword id="KW-0793">Thylakoid</keyword>
<keyword id="KW-0812">Transmembrane</keyword>
<keyword id="KW-1133">Transmembrane helix</keyword>
<dbReference type="EMBL" id="AY522329">
    <property type="status" value="NOT_ANNOTATED_CDS"/>
    <property type="molecule type" value="Genomic_DNA"/>
</dbReference>
<dbReference type="RefSeq" id="YP_009161352.1">
    <property type="nucleotide sequence ID" value="NC_027678.1"/>
</dbReference>
<dbReference type="SMR" id="P0C412"/>
<dbReference type="STRING" id="39946.P0C412"/>
<dbReference type="Proteomes" id="UP000007015">
    <property type="component" value="Chloroplast"/>
</dbReference>
<dbReference type="GO" id="GO:0009535">
    <property type="term" value="C:chloroplast thylakoid membrane"/>
    <property type="evidence" value="ECO:0007669"/>
    <property type="project" value="UniProtKB-SubCell"/>
</dbReference>
<dbReference type="GO" id="GO:0009523">
    <property type="term" value="C:photosystem II"/>
    <property type="evidence" value="ECO:0007669"/>
    <property type="project" value="UniProtKB-KW"/>
</dbReference>
<dbReference type="GO" id="GO:0009536">
    <property type="term" value="C:plastid"/>
    <property type="evidence" value="ECO:0000305"/>
    <property type="project" value="Gramene"/>
</dbReference>
<dbReference type="GO" id="GO:0019684">
    <property type="term" value="P:photosynthesis, light reaction"/>
    <property type="evidence" value="ECO:0007669"/>
    <property type="project" value="InterPro"/>
</dbReference>
<dbReference type="HAMAP" id="MF_00438">
    <property type="entry name" value="PSII_PsbM"/>
    <property type="match status" value="1"/>
</dbReference>
<dbReference type="InterPro" id="IPR007826">
    <property type="entry name" value="PSII_PsbM"/>
</dbReference>
<dbReference type="InterPro" id="IPR037269">
    <property type="entry name" value="PSII_PsbM_sf"/>
</dbReference>
<dbReference type="NCBIfam" id="TIGR03038">
    <property type="entry name" value="PS_II_psbM"/>
    <property type="match status" value="1"/>
</dbReference>
<dbReference type="PANTHER" id="PTHR35774">
    <property type="entry name" value="PHOTOSYSTEM II REACTION CENTER PROTEIN M"/>
    <property type="match status" value="1"/>
</dbReference>
<dbReference type="PANTHER" id="PTHR35774:SF1">
    <property type="entry name" value="PHOTOSYSTEM II REACTION CENTER PROTEIN M"/>
    <property type="match status" value="1"/>
</dbReference>
<dbReference type="Pfam" id="PF05151">
    <property type="entry name" value="PsbM"/>
    <property type="match status" value="1"/>
</dbReference>
<dbReference type="SUPFAM" id="SSF161033">
    <property type="entry name" value="Photosystem II reaction center protein M, PsbM"/>
    <property type="match status" value="1"/>
</dbReference>
<reference key="1">
    <citation type="journal article" date="2004" name="Plant Physiol.">
        <title>A comparison of rice chloroplast genomes.</title>
        <authorList>
            <person name="Tang J."/>
            <person name="Xia H."/>
            <person name="Cao M."/>
            <person name="Zhang X."/>
            <person name="Zeng W."/>
            <person name="Hu S."/>
            <person name="Tong W."/>
            <person name="Wang J."/>
            <person name="Wang J."/>
            <person name="Yu J."/>
            <person name="Yang H."/>
            <person name="Zhu L."/>
        </authorList>
    </citation>
    <scope>NUCLEOTIDE SEQUENCE [LARGE SCALE GENOMIC DNA]</scope>
    <source>
        <strain>cv. 93-11</strain>
    </source>
</reference>
<feature type="chain" id="PRO_0000289570" description="Photosystem II reaction center protein M">
    <location>
        <begin position="1"/>
        <end position="34"/>
    </location>
</feature>
<feature type="transmembrane region" description="Helical" evidence="1">
    <location>
        <begin position="5"/>
        <end position="25"/>
    </location>
</feature>
<geneLocation type="chloroplast"/>
<proteinExistence type="inferred from homology"/>